<sequence length="771" mass="86944">MAVAHNLGFPRIGADRELKKALEAYWKGELDEQGLRQVGRQLRARHWQAQLDAGIELLPVGDFAWYDQVLSHSLMFGVIPQRFRPAEGQATLDTLFAMARGVARSCCGGAQAQEMTKWFDTNYHYLVPEFSVDQQFQLSWTQLFEEVEEAKALGHAIKPVLIGPLSYLWLGKLKGEADQTQTFDKLELLDRLLPVYGEVLDRLAAQGVEWVQIDEPILALDLPQDWKNAFERAYNLLQRAPLKKLVATYFGGLEDNLGLAATLPVDGLHIDLVRAPEQYPVILDRLPAYKVLSLGLVNGRNVWRCDLDKALEVARHAAERLGERLWLAPSCSLLHSPVDLEREDRLDEEVKSWLAFAVQKCSEVATLARAIDDPQDAEVQAALARSRAVQAARAQSPRIHKPAVQARLAAIEAKDSRRTSVFATRIELQRARLQLPAFPTTTIGSFPQTPAIRLARQAYKQGRLSLGDYTEAMQAEIRHAVAVQEQIGLDVLVHGEAERNDMVEYFAEQLEGYVFTRFGWVQSYGSRCVKPAIIYGDLSRPRPMTVDWIRYAQQQTDRIMKGMLTGPVTMLMWSFAREDVPREVQARQLALAIRDEVCDLEAAGIRIIQIDEAAFREGLPLRREQWRHYLDWAVEAFRLCASGVRDETQIHTHMCYSEFNDVIESIAAMDADVITIETSRSQMELLEAFRAFDYPNDIGPGVYDIHSPRVPDTAEMVQLLEKAAECIPAERLWVNPDCGLKTRGWPETEAALVNMVAAARQLRAARSAKVA</sequence>
<reference key="1">
    <citation type="journal article" date="2008" name="Proc. Natl. Acad. Sci. U.S.A.">
        <title>Nitrogen fixation island and rhizosphere competence traits in the genome of root-associated Pseudomonas stutzeri A1501.</title>
        <authorList>
            <person name="Yan Y."/>
            <person name="Yang J."/>
            <person name="Dou Y."/>
            <person name="Chen M."/>
            <person name="Ping S."/>
            <person name="Peng J."/>
            <person name="Lu W."/>
            <person name="Zhang W."/>
            <person name="Yao Z."/>
            <person name="Li H."/>
            <person name="Liu W."/>
            <person name="He S."/>
            <person name="Geng L."/>
            <person name="Zhang X."/>
            <person name="Yang F."/>
            <person name="Yu H."/>
            <person name="Zhan Y."/>
            <person name="Li D."/>
            <person name="Lin Z."/>
            <person name="Wang Y."/>
            <person name="Elmerich C."/>
            <person name="Lin M."/>
            <person name="Jin Q."/>
        </authorList>
    </citation>
    <scope>NUCLEOTIDE SEQUENCE [LARGE SCALE GENOMIC DNA]</scope>
    <source>
        <strain>A1501</strain>
    </source>
</reference>
<proteinExistence type="inferred from homology"/>
<gene>
    <name evidence="1" type="primary">metE</name>
    <name type="ordered locus">PST_2850</name>
</gene>
<accession>A4VNE5</accession>
<name>METE_STUS1</name>
<organism>
    <name type="scientific">Stutzerimonas stutzeri (strain A1501)</name>
    <name type="common">Pseudomonas stutzeri</name>
    <dbReference type="NCBI Taxonomy" id="379731"/>
    <lineage>
        <taxon>Bacteria</taxon>
        <taxon>Pseudomonadati</taxon>
        <taxon>Pseudomonadota</taxon>
        <taxon>Gammaproteobacteria</taxon>
        <taxon>Pseudomonadales</taxon>
        <taxon>Pseudomonadaceae</taxon>
        <taxon>Stutzerimonas</taxon>
    </lineage>
</organism>
<comment type="function">
    <text evidence="1">Catalyzes the transfer of a methyl group from 5-methyltetrahydrofolate to homocysteine resulting in methionine formation.</text>
</comment>
<comment type="catalytic activity">
    <reaction evidence="1">
        <text>5-methyltetrahydropteroyltri-L-glutamate + L-homocysteine = tetrahydropteroyltri-L-glutamate + L-methionine</text>
        <dbReference type="Rhea" id="RHEA:21196"/>
        <dbReference type="ChEBI" id="CHEBI:57844"/>
        <dbReference type="ChEBI" id="CHEBI:58140"/>
        <dbReference type="ChEBI" id="CHEBI:58199"/>
        <dbReference type="ChEBI" id="CHEBI:58207"/>
        <dbReference type="EC" id="2.1.1.14"/>
    </reaction>
</comment>
<comment type="cofactor">
    <cofactor evidence="1">
        <name>Zn(2+)</name>
        <dbReference type="ChEBI" id="CHEBI:29105"/>
    </cofactor>
    <text evidence="1">Binds 1 zinc ion per subunit.</text>
</comment>
<comment type="pathway">
    <text evidence="1">Amino-acid biosynthesis; L-methionine biosynthesis via de novo pathway; L-methionine from L-homocysteine (MetE route): step 1/1.</text>
</comment>
<comment type="similarity">
    <text evidence="1">Belongs to the vitamin-B12 independent methionine synthase family.</text>
</comment>
<dbReference type="EC" id="2.1.1.14" evidence="1"/>
<dbReference type="EMBL" id="CP000304">
    <property type="protein sequence ID" value="ABP80496.1"/>
    <property type="molecule type" value="Genomic_DNA"/>
</dbReference>
<dbReference type="RefSeq" id="WP_011913953.1">
    <property type="nucleotide sequence ID" value="NC_009434.1"/>
</dbReference>
<dbReference type="SMR" id="A4VNE5"/>
<dbReference type="KEGG" id="psa:PST_2850"/>
<dbReference type="eggNOG" id="COG0620">
    <property type="taxonomic scope" value="Bacteria"/>
</dbReference>
<dbReference type="HOGENOM" id="CLU_013175_0_0_6"/>
<dbReference type="UniPathway" id="UPA00051">
    <property type="reaction ID" value="UER00082"/>
</dbReference>
<dbReference type="Proteomes" id="UP000000233">
    <property type="component" value="Chromosome"/>
</dbReference>
<dbReference type="GO" id="GO:0003871">
    <property type="term" value="F:5-methyltetrahydropteroyltriglutamate-homocysteine S-methyltransferase activity"/>
    <property type="evidence" value="ECO:0007669"/>
    <property type="project" value="UniProtKB-UniRule"/>
</dbReference>
<dbReference type="GO" id="GO:0008270">
    <property type="term" value="F:zinc ion binding"/>
    <property type="evidence" value="ECO:0007669"/>
    <property type="project" value="InterPro"/>
</dbReference>
<dbReference type="GO" id="GO:0009086">
    <property type="term" value="P:methionine biosynthetic process"/>
    <property type="evidence" value="ECO:0007669"/>
    <property type="project" value="UniProtKB-UniRule"/>
</dbReference>
<dbReference type="GO" id="GO:0032259">
    <property type="term" value="P:methylation"/>
    <property type="evidence" value="ECO:0007669"/>
    <property type="project" value="UniProtKB-KW"/>
</dbReference>
<dbReference type="CDD" id="cd03311">
    <property type="entry name" value="CIMS_C_terminal_like"/>
    <property type="match status" value="1"/>
</dbReference>
<dbReference type="CDD" id="cd03312">
    <property type="entry name" value="CIMS_N_terminal_like"/>
    <property type="match status" value="1"/>
</dbReference>
<dbReference type="FunFam" id="3.20.20.210:FF:000002">
    <property type="entry name" value="5-methyltetrahydropteroyltriglutamate--homocysteine methyltransferase"/>
    <property type="match status" value="1"/>
</dbReference>
<dbReference type="FunFam" id="3.20.20.210:FF:000003">
    <property type="entry name" value="5-methyltetrahydropteroyltriglutamate--homocysteine methyltransferase"/>
    <property type="match status" value="1"/>
</dbReference>
<dbReference type="Gene3D" id="3.20.20.210">
    <property type="match status" value="2"/>
</dbReference>
<dbReference type="HAMAP" id="MF_00172">
    <property type="entry name" value="Meth_synth"/>
    <property type="match status" value="1"/>
</dbReference>
<dbReference type="InterPro" id="IPR013215">
    <property type="entry name" value="Cbl-indep_Met_Synth_N"/>
</dbReference>
<dbReference type="InterPro" id="IPR006276">
    <property type="entry name" value="Cobalamin-indep_Met_synthase"/>
</dbReference>
<dbReference type="InterPro" id="IPR002629">
    <property type="entry name" value="Met_Synth_C/arc"/>
</dbReference>
<dbReference type="InterPro" id="IPR038071">
    <property type="entry name" value="UROD/MetE-like_sf"/>
</dbReference>
<dbReference type="NCBIfam" id="TIGR01371">
    <property type="entry name" value="met_syn_B12ind"/>
    <property type="match status" value="1"/>
</dbReference>
<dbReference type="NCBIfam" id="NF003556">
    <property type="entry name" value="PRK05222.1"/>
    <property type="match status" value="1"/>
</dbReference>
<dbReference type="PANTHER" id="PTHR30519">
    <property type="entry name" value="5-METHYLTETRAHYDROPTEROYLTRIGLUTAMATE--HOMOCYSTEINE METHYLTRANSFERASE"/>
    <property type="match status" value="1"/>
</dbReference>
<dbReference type="Pfam" id="PF08267">
    <property type="entry name" value="Meth_synt_1"/>
    <property type="match status" value="1"/>
</dbReference>
<dbReference type="Pfam" id="PF01717">
    <property type="entry name" value="Meth_synt_2"/>
    <property type="match status" value="1"/>
</dbReference>
<dbReference type="PIRSF" id="PIRSF000382">
    <property type="entry name" value="MeTrfase_B12_ind"/>
    <property type="match status" value="1"/>
</dbReference>
<dbReference type="SUPFAM" id="SSF51726">
    <property type="entry name" value="UROD/MetE-like"/>
    <property type="match status" value="2"/>
</dbReference>
<protein>
    <recommendedName>
        <fullName evidence="1">5-methyltetrahydropteroyltriglutamate--homocysteine methyltransferase</fullName>
        <ecNumber evidence="1">2.1.1.14</ecNumber>
    </recommendedName>
    <alternativeName>
        <fullName evidence="1">Cobalamin-independent methionine synthase</fullName>
    </alternativeName>
    <alternativeName>
        <fullName evidence="1">Methionine synthase, vitamin-B12 independent isozyme</fullName>
    </alternativeName>
</protein>
<evidence type="ECO:0000255" key="1">
    <source>
        <dbReference type="HAMAP-Rule" id="MF_00172"/>
    </source>
</evidence>
<feature type="chain" id="PRO_1000017266" description="5-methyltetrahydropteroyltriglutamate--homocysteine methyltransferase">
    <location>
        <begin position="1"/>
        <end position="771"/>
    </location>
</feature>
<feature type="active site" description="Proton donor" evidence="1">
    <location>
        <position position="706"/>
    </location>
</feature>
<feature type="binding site" evidence="1">
    <location>
        <begin position="16"/>
        <end position="19"/>
    </location>
    <ligand>
        <name>5-methyltetrahydropteroyltri-L-glutamate</name>
        <dbReference type="ChEBI" id="CHEBI:58207"/>
    </ligand>
</feature>
<feature type="binding site" evidence="1">
    <location>
        <position position="117"/>
    </location>
    <ligand>
        <name>5-methyltetrahydropteroyltri-L-glutamate</name>
        <dbReference type="ChEBI" id="CHEBI:58207"/>
    </ligand>
</feature>
<feature type="binding site" evidence="1">
    <location>
        <begin position="443"/>
        <end position="445"/>
    </location>
    <ligand>
        <name>L-homocysteine</name>
        <dbReference type="ChEBI" id="CHEBI:58199"/>
    </ligand>
</feature>
<feature type="binding site" evidence="1">
    <location>
        <begin position="443"/>
        <end position="445"/>
    </location>
    <ligand>
        <name>L-methionine</name>
        <dbReference type="ChEBI" id="CHEBI:57844"/>
    </ligand>
</feature>
<feature type="binding site" evidence="1">
    <location>
        <position position="496"/>
    </location>
    <ligand>
        <name>L-homocysteine</name>
        <dbReference type="ChEBI" id="CHEBI:58199"/>
    </ligand>
</feature>
<feature type="binding site" evidence="1">
    <location>
        <position position="496"/>
    </location>
    <ligand>
        <name>L-methionine</name>
        <dbReference type="ChEBI" id="CHEBI:57844"/>
    </ligand>
</feature>
<feature type="binding site" evidence="1">
    <location>
        <begin position="527"/>
        <end position="528"/>
    </location>
    <ligand>
        <name>5-methyltetrahydropteroyltri-L-glutamate</name>
        <dbReference type="ChEBI" id="CHEBI:58207"/>
    </ligand>
</feature>
<feature type="binding site" evidence="1">
    <location>
        <position position="573"/>
    </location>
    <ligand>
        <name>5-methyltetrahydropteroyltri-L-glutamate</name>
        <dbReference type="ChEBI" id="CHEBI:58207"/>
    </ligand>
</feature>
<feature type="binding site" evidence="1">
    <location>
        <position position="611"/>
    </location>
    <ligand>
        <name>L-homocysteine</name>
        <dbReference type="ChEBI" id="CHEBI:58199"/>
    </ligand>
</feature>
<feature type="binding site" evidence="1">
    <location>
        <position position="611"/>
    </location>
    <ligand>
        <name>L-methionine</name>
        <dbReference type="ChEBI" id="CHEBI:57844"/>
    </ligand>
</feature>
<feature type="binding site" evidence="1">
    <location>
        <position position="617"/>
    </location>
    <ligand>
        <name>5-methyltetrahydropteroyltri-L-glutamate</name>
        <dbReference type="ChEBI" id="CHEBI:58207"/>
    </ligand>
</feature>
<feature type="binding site" evidence="1">
    <location>
        <position position="653"/>
    </location>
    <ligand>
        <name>Zn(2+)</name>
        <dbReference type="ChEBI" id="CHEBI:29105"/>
        <note>catalytic</note>
    </ligand>
</feature>
<feature type="binding site" evidence="1">
    <location>
        <position position="655"/>
    </location>
    <ligand>
        <name>Zn(2+)</name>
        <dbReference type="ChEBI" id="CHEBI:29105"/>
        <note>catalytic</note>
    </ligand>
</feature>
<feature type="binding site" evidence="1">
    <location>
        <position position="677"/>
    </location>
    <ligand>
        <name>Zn(2+)</name>
        <dbReference type="ChEBI" id="CHEBI:29105"/>
        <note>catalytic</note>
    </ligand>
</feature>
<feature type="binding site" evidence="1">
    <location>
        <position position="738"/>
    </location>
    <ligand>
        <name>Zn(2+)</name>
        <dbReference type="ChEBI" id="CHEBI:29105"/>
        <note>catalytic</note>
    </ligand>
</feature>
<keyword id="KW-0028">Amino-acid biosynthesis</keyword>
<keyword id="KW-0479">Metal-binding</keyword>
<keyword id="KW-0486">Methionine biosynthesis</keyword>
<keyword id="KW-0489">Methyltransferase</keyword>
<keyword id="KW-1185">Reference proteome</keyword>
<keyword id="KW-0677">Repeat</keyword>
<keyword id="KW-0808">Transferase</keyword>
<keyword id="KW-0862">Zinc</keyword>